<evidence type="ECO:0000255" key="1">
    <source>
        <dbReference type="PROSITE-ProRule" id="PRU01020"/>
    </source>
</evidence>
<evidence type="ECO:0000269" key="2">
    <source>
    </source>
</evidence>
<evidence type="ECO:0000303" key="3">
    <source>
    </source>
</evidence>
<evidence type="ECO:0000312" key="4">
    <source>
        <dbReference type="EMBL" id="BAI79245.1"/>
    </source>
</evidence>
<organism>
    <name type="scientific">Carapichea ipecacuanha</name>
    <name type="common">Ipecac</name>
    <name type="synonym">Callicocca ipecacuanha</name>
    <dbReference type="NCBI Taxonomy" id="77880"/>
    <lineage>
        <taxon>Eukaryota</taxon>
        <taxon>Viridiplantae</taxon>
        <taxon>Streptophyta</taxon>
        <taxon>Embryophyta</taxon>
        <taxon>Tracheophyta</taxon>
        <taxon>Spermatophyta</taxon>
        <taxon>Magnoliopsida</taxon>
        <taxon>eudicotyledons</taxon>
        <taxon>Gunneridae</taxon>
        <taxon>Pentapetalae</taxon>
        <taxon>asterids</taxon>
        <taxon>lamiids</taxon>
        <taxon>Gentianales</taxon>
        <taxon>Rubiaceae</taxon>
        <taxon>Rubioideae</taxon>
        <taxon>Palicoureeae</taxon>
        <taxon>Carapichea</taxon>
    </lineage>
</organism>
<comment type="function">
    <text evidence="2">O-methyltransferase involved in the biosynthesis of ipecac and benzylisoquinoline monoterpenoid-isoquinoline alkaloids natural products, starting by the condensation of dopamine and secologanin, and including emetine and cephaeline, drugs used both as anti-protozoal (e.g. treatment of ameobiasis) and as emetic agents (PubMed:20061395). Catalyzes 2-O-methylation of 3-O-methylredipecamine and, with less efficiency, the 7-O-methylation of (S)-coclaurine, (R,S)-N-methylcoclaurine, (R,S)-4'-O-methylcoclaurine, (R,S)-6-O-methyllaudanosoline, nororientaline, (S)-norreticuline and (S)-reticuline (PubMed:20061395).</text>
</comment>
<comment type="catalytic activity">
    <reaction evidence="2">
        <text>(S)-reticuline + S-adenosyl-L-methionine = (S)-laudanine + S-adenosyl-L-homocysteine + H(+)</text>
        <dbReference type="Rhea" id="RHEA:10444"/>
        <dbReference type="ChEBI" id="CHEBI:15378"/>
        <dbReference type="ChEBI" id="CHEBI:57856"/>
        <dbReference type="ChEBI" id="CHEBI:57873"/>
        <dbReference type="ChEBI" id="CHEBI:59789"/>
        <dbReference type="ChEBI" id="CHEBI:75999"/>
    </reaction>
    <physiologicalReaction direction="left-to-right" evidence="2">
        <dbReference type="Rhea" id="RHEA:10445"/>
    </physiologicalReaction>
</comment>
<comment type="biophysicochemical properties">
    <kinetics>
        <KM evidence="2">64 uM for 3-O-methylredipecamine</KM>
        <KM evidence="2">34 uM for S-adenosyl-L-methionine</KM>
        <Vmax evidence="2">15.0 nmol/min/mg enzyme with 3-O-methylredipecamine as substrate</Vmax>
        <Vmax evidence="2">12.8 nmol/min/mg enzyme with S-adenosyl-L-methionine as substrate</Vmax>
        <text evidence="2">kcat is 10.5x10(-3) sec(-1) with 3-O-methylredipecamine as substrate (PubMed:20061395). kcat is 8.9x10(-3) sec(-1) with S-adenosyl-L-methionine as substrate (PubMed:20061395).</text>
    </kinetics>
    <phDependence>
        <text evidence="2">Optimum pH is 7 with (S)-reticuline as substrate.</text>
    </phDependence>
    <temperatureDependence>
        <text evidence="2">Optimum temperature is 40 degrees Celsius with (S)-reticuline as substrate.</text>
    </temperatureDependence>
</comment>
<comment type="pathway">
    <text evidence="2">Alkaloid biosynthesis.</text>
</comment>
<comment type="subcellular location">
    <subcellularLocation>
        <location evidence="2">Cytoplasm</location>
        <location evidence="2">Cytosol</location>
    </subcellularLocation>
</comment>
<comment type="tissue specificity">
    <text evidence="2">Expressed in roots.</text>
</comment>
<comment type="similarity">
    <text evidence="1">Belongs to the class I-like SAM-binding methyltransferase superfamily. Cation-independent O-methyltransferase family.</text>
</comment>
<feature type="chain" id="PRO_0000462200" description="3-O-methylredipecamine 2-O-methyltransferase IpeOMT3">
    <location>
        <begin position="1"/>
        <end position="358"/>
    </location>
</feature>
<feature type="active site" description="Proton acceptor" evidence="1">
    <location>
        <position position="254"/>
    </location>
</feature>
<feature type="binding site" evidence="1">
    <location>
        <position position="193"/>
    </location>
    <ligand>
        <name>S-adenosyl-L-methionine</name>
        <dbReference type="ChEBI" id="CHEBI:59789"/>
    </ligand>
</feature>
<feature type="binding site" evidence="1">
    <location>
        <position position="216"/>
    </location>
    <ligand>
        <name>S-adenosyl-L-methionine</name>
        <dbReference type="ChEBI" id="CHEBI:59789"/>
    </ligand>
</feature>
<feature type="binding site" evidence="1">
    <location>
        <position position="236"/>
    </location>
    <ligand>
        <name>S-adenosyl-L-methionine</name>
        <dbReference type="ChEBI" id="CHEBI:59789"/>
    </ligand>
</feature>
<feature type="binding site" evidence="1">
    <location>
        <position position="237"/>
    </location>
    <ligand>
        <name>S-adenosyl-L-methionine</name>
        <dbReference type="ChEBI" id="CHEBI:59789"/>
    </ligand>
</feature>
<feature type="binding site" evidence="1">
    <location>
        <position position="250"/>
    </location>
    <ligand>
        <name>S-adenosyl-L-methionine</name>
        <dbReference type="ChEBI" id="CHEBI:59789"/>
    </ligand>
</feature>
<gene>
    <name evidence="4" type="primary">OMT3</name>
</gene>
<protein>
    <recommendedName>
        <fullName evidence="3">3-O-methylredipecamine 2-O-methyltransferase IpeOMT3</fullName>
        <ecNumber evidence="2">2.1.1.-</ecNumber>
    </recommendedName>
    <alternativeName>
        <fullName evidence="3">(S)-norreticuline 7-O-methyltransferase IpeOMT1</fullName>
        <ecNumber evidence="2">2.1.1.-</ecNumber>
    </alternativeName>
    <alternativeName>
        <fullName evidence="3">Ipecac/benzylisoquinoline alkaloid O-methyltransferase 3</fullName>
        <shortName evidence="3 4">IpeOMT3</shortName>
        <ecNumber evidence="2">2.1.1.-</ecNumber>
    </alternativeName>
</protein>
<proteinExistence type="evidence at protein level"/>
<dbReference type="EC" id="2.1.1.-" evidence="2"/>
<dbReference type="EMBL" id="AB527084">
    <property type="protein sequence ID" value="BAI79245.1"/>
    <property type="molecule type" value="mRNA"/>
</dbReference>
<dbReference type="KEGG" id="ag:BAI79245"/>
<dbReference type="BioCyc" id="MetaCyc:MONOMER-17757"/>
<dbReference type="GO" id="GO:0005829">
    <property type="term" value="C:cytosol"/>
    <property type="evidence" value="ECO:0000314"/>
    <property type="project" value="UniProtKB"/>
</dbReference>
<dbReference type="GO" id="GO:0008171">
    <property type="term" value="F:O-methyltransferase activity"/>
    <property type="evidence" value="ECO:0000314"/>
    <property type="project" value="UniProtKB"/>
</dbReference>
<dbReference type="GO" id="GO:0046983">
    <property type="term" value="F:protein dimerization activity"/>
    <property type="evidence" value="ECO:0007669"/>
    <property type="project" value="InterPro"/>
</dbReference>
<dbReference type="GO" id="GO:0033075">
    <property type="term" value="P:isoquinoline alkaloid biosynthetic process"/>
    <property type="evidence" value="ECO:0000314"/>
    <property type="project" value="UniProtKB"/>
</dbReference>
<dbReference type="GO" id="GO:0032259">
    <property type="term" value="P:methylation"/>
    <property type="evidence" value="ECO:0000314"/>
    <property type="project" value="UniProtKB"/>
</dbReference>
<dbReference type="CDD" id="cd02440">
    <property type="entry name" value="AdoMet_MTases"/>
    <property type="match status" value="1"/>
</dbReference>
<dbReference type="FunFam" id="3.40.50.150:FF:000206">
    <property type="entry name" value="O-methyltransferase ZRP4"/>
    <property type="match status" value="1"/>
</dbReference>
<dbReference type="Gene3D" id="3.40.50.150">
    <property type="entry name" value="Vaccinia Virus protein VP39"/>
    <property type="match status" value="1"/>
</dbReference>
<dbReference type="Gene3D" id="1.10.10.10">
    <property type="entry name" value="Winged helix-like DNA-binding domain superfamily/Winged helix DNA-binding domain"/>
    <property type="match status" value="1"/>
</dbReference>
<dbReference type="InterPro" id="IPR016461">
    <property type="entry name" value="COMT-like"/>
</dbReference>
<dbReference type="InterPro" id="IPR001077">
    <property type="entry name" value="O_MeTrfase_dom"/>
</dbReference>
<dbReference type="InterPro" id="IPR012967">
    <property type="entry name" value="Plant_O-MeTrfase_dimerisation"/>
</dbReference>
<dbReference type="InterPro" id="IPR029063">
    <property type="entry name" value="SAM-dependent_MTases_sf"/>
</dbReference>
<dbReference type="InterPro" id="IPR036388">
    <property type="entry name" value="WH-like_DNA-bd_sf"/>
</dbReference>
<dbReference type="InterPro" id="IPR036390">
    <property type="entry name" value="WH_DNA-bd_sf"/>
</dbReference>
<dbReference type="PANTHER" id="PTHR11746">
    <property type="entry name" value="O-METHYLTRANSFERASE"/>
    <property type="match status" value="1"/>
</dbReference>
<dbReference type="Pfam" id="PF08100">
    <property type="entry name" value="Dimerisation"/>
    <property type="match status" value="1"/>
</dbReference>
<dbReference type="Pfam" id="PF00891">
    <property type="entry name" value="Methyltransf_2"/>
    <property type="match status" value="1"/>
</dbReference>
<dbReference type="PIRSF" id="PIRSF005739">
    <property type="entry name" value="O-mtase"/>
    <property type="match status" value="1"/>
</dbReference>
<dbReference type="SUPFAM" id="SSF53335">
    <property type="entry name" value="S-adenosyl-L-methionine-dependent methyltransferases"/>
    <property type="match status" value="1"/>
</dbReference>
<dbReference type="SUPFAM" id="SSF46785">
    <property type="entry name" value="Winged helix' DNA-binding domain"/>
    <property type="match status" value="1"/>
</dbReference>
<dbReference type="PROSITE" id="PS51683">
    <property type="entry name" value="SAM_OMT_II"/>
    <property type="match status" value="1"/>
</dbReference>
<sequence length="358" mass="39670">METVESSSSAELLRAQMHFSTQLFGFHYTAALKCAVKLGIPDAIKQHGKPMNLSELNSALSINPSKAPCIHRLMRILVTAGYFAQENECFSLTSAGRHFLKDDPLNIRALVLLELHPALVKPWIALGEWFQNDDVSPFATAHGKSFWDYVTSDPELRKLFDESMADDSQLIAKALVTEFRYVFEGLKSLVDVGGGSGTLARAIAKAFPNLKCTVCDLPDAVANEHGDGNLDFVAGDMFERVPSADSILLKHILHDWSDEKCVEILKKCREAIPKNGGKVIIVDKLLKNRGHGHAENEHDEATESPLSCDMEMLVLVNGKERDEKEWAKLFSGAGFNDYKYNITPVLGSTSLIEVNFYN</sequence>
<reference evidence="4" key="1">
    <citation type="journal article" date="2010" name="J. Biol. Chem.">
        <title>Three new O-methyltransferases are sufficient for all O-methylation reactions of ipecac alkaloid biosynthesis in root culture of Psychotria ipecacuanha.</title>
        <authorList>
            <person name="Nomura T."/>
            <person name="Kutchan T.M."/>
        </authorList>
    </citation>
    <scope>NUCLEOTIDE SEQUENCE [MRNA]</scope>
    <scope>FUNCTION</scope>
    <scope>CATALYTIC ACTIVITY</scope>
    <scope>BIOPHYSICOCHEMICAL PROPERTIES</scope>
    <scope>SUBCELLULAR LOCATION</scope>
    <scope>PATHWAY</scope>
    <scope>TISSUE SPECIFICITY</scope>
    <source>
        <tissue>Root</tissue>
    </source>
</reference>
<name>OMT3_CARIP</name>
<accession>D3KYA0</accession>
<keyword id="KW-0017">Alkaloid metabolism</keyword>
<keyword id="KW-0963">Cytoplasm</keyword>
<keyword id="KW-0489">Methyltransferase</keyword>
<keyword id="KW-0949">S-adenosyl-L-methionine</keyword>
<keyword id="KW-0808">Transferase</keyword>